<sequence length="520" mass="57169">MSTTAYPDTILIIDFGSQVTQLIARRVREANVYCEIVPFQSADEAFKRLQPKGVILSGSPHSTTDIGSPRAPQAIFDAGIPVLGICYGEQTMCAQLGGNVESGHDREFGRAFLDVQEDSPLFAGIWAKGTRHQVWMSHGDRVTSLPDGFTIIGTSPNAPYAVIADEKRKYYGVQFHPEVVHTPDGAKLLQNFVHRIVGVKPGWTMGAYREQAVEAIRKQVGSGKVICALSGGVDSSVAALLAHEAVGDQLTCILVDHGLMRKDEVQQVVEMFREHYNLPLILVDASDRFIGALEGESDPEKKRKTIGRLFIEVFEEEARKLGGADFLVQGTLYPDVIESVSFTGGPSVTIKSHHNVGGLPERMKMQLVEPLRELFKDEVRLLGKELGLPDSFIGRHPFPGPGLAIRCPGGVTREKLEILREADAIYLDEIRKAGLYDAIWQAFAVLLPVQTVGVMGDGRTYEFVCALRAVTSVDGMTADFYHYDMNFLGNAATRIINEVRGINRVVYDVTSKPPGTIEWE</sequence>
<dbReference type="EC" id="6.3.5.2" evidence="1"/>
<dbReference type="EMBL" id="CP001489">
    <property type="protein sequence ID" value="ACO02212.1"/>
    <property type="molecule type" value="Genomic_DNA"/>
</dbReference>
<dbReference type="RefSeq" id="WP_004681699.1">
    <property type="nucleotide sequence ID" value="NC_012442.1"/>
</dbReference>
<dbReference type="SMR" id="C0RKS9"/>
<dbReference type="MEROPS" id="C26.957"/>
<dbReference type="KEGG" id="bmi:BMEA_B0360"/>
<dbReference type="HOGENOM" id="CLU_014340_0_5_5"/>
<dbReference type="UniPathway" id="UPA00189">
    <property type="reaction ID" value="UER00296"/>
</dbReference>
<dbReference type="Proteomes" id="UP000001748">
    <property type="component" value="Chromosome II"/>
</dbReference>
<dbReference type="GO" id="GO:0005829">
    <property type="term" value="C:cytosol"/>
    <property type="evidence" value="ECO:0007669"/>
    <property type="project" value="TreeGrafter"/>
</dbReference>
<dbReference type="GO" id="GO:0005524">
    <property type="term" value="F:ATP binding"/>
    <property type="evidence" value="ECO:0007669"/>
    <property type="project" value="UniProtKB-UniRule"/>
</dbReference>
<dbReference type="GO" id="GO:0003921">
    <property type="term" value="F:GMP synthase activity"/>
    <property type="evidence" value="ECO:0007669"/>
    <property type="project" value="InterPro"/>
</dbReference>
<dbReference type="CDD" id="cd01742">
    <property type="entry name" value="GATase1_GMP_Synthase"/>
    <property type="match status" value="1"/>
</dbReference>
<dbReference type="CDD" id="cd01997">
    <property type="entry name" value="GMP_synthase_C"/>
    <property type="match status" value="1"/>
</dbReference>
<dbReference type="FunFam" id="3.30.300.10:FF:000002">
    <property type="entry name" value="GMP synthase [glutamine-hydrolyzing]"/>
    <property type="match status" value="1"/>
</dbReference>
<dbReference type="FunFam" id="3.40.50.620:FF:000001">
    <property type="entry name" value="GMP synthase [glutamine-hydrolyzing]"/>
    <property type="match status" value="1"/>
</dbReference>
<dbReference type="FunFam" id="3.40.50.880:FF:000001">
    <property type="entry name" value="GMP synthase [glutamine-hydrolyzing]"/>
    <property type="match status" value="1"/>
</dbReference>
<dbReference type="Gene3D" id="3.30.300.10">
    <property type="match status" value="1"/>
</dbReference>
<dbReference type="Gene3D" id="3.40.50.880">
    <property type="match status" value="1"/>
</dbReference>
<dbReference type="Gene3D" id="3.40.50.620">
    <property type="entry name" value="HUPs"/>
    <property type="match status" value="1"/>
</dbReference>
<dbReference type="HAMAP" id="MF_00344">
    <property type="entry name" value="GMP_synthase"/>
    <property type="match status" value="1"/>
</dbReference>
<dbReference type="InterPro" id="IPR029062">
    <property type="entry name" value="Class_I_gatase-like"/>
</dbReference>
<dbReference type="InterPro" id="IPR017926">
    <property type="entry name" value="GATASE"/>
</dbReference>
<dbReference type="InterPro" id="IPR001674">
    <property type="entry name" value="GMP_synth_C"/>
</dbReference>
<dbReference type="InterPro" id="IPR004739">
    <property type="entry name" value="GMP_synth_GATase"/>
</dbReference>
<dbReference type="InterPro" id="IPR022955">
    <property type="entry name" value="GMP_synthase"/>
</dbReference>
<dbReference type="InterPro" id="IPR025777">
    <property type="entry name" value="GMPS_ATP_PPase_dom"/>
</dbReference>
<dbReference type="InterPro" id="IPR022310">
    <property type="entry name" value="NAD/GMP_synthase"/>
</dbReference>
<dbReference type="InterPro" id="IPR014729">
    <property type="entry name" value="Rossmann-like_a/b/a_fold"/>
</dbReference>
<dbReference type="NCBIfam" id="TIGR00884">
    <property type="entry name" value="guaA_Cterm"/>
    <property type="match status" value="1"/>
</dbReference>
<dbReference type="NCBIfam" id="TIGR00888">
    <property type="entry name" value="guaA_Nterm"/>
    <property type="match status" value="1"/>
</dbReference>
<dbReference type="NCBIfam" id="NF000848">
    <property type="entry name" value="PRK00074.1"/>
    <property type="match status" value="1"/>
</dbReference>
<dbReference type="PANTHER" id="PTHR11922:SF2">
    <property type="entry name" value="GMP SYNTHASE [GLUTAMINE-HYDROLYZING]"/>
    <property type="match status" value="1"/>
</dbReference>
<dbReference type="PANTHER" id="PTHR11922">
    <property type="entry name" value="GMP SYNTHASE-RELATED"/>
    <property type="match status" value="1"/>
</dbReference>
<dbReference type="Pfam" id="PF00117">
    <property type="entry name" value="GATase"/>
    <property type="match status" value="1"/>
</dbReference>
<dbReference type="Pfam" id="PF00958">
    <property type="entry name" value="GMP_synt_C"/>
    <property type="match status" value="1"/>
</dbReference>
<dbReference type="Pfam" id="PF02540">
    <property type="entry name" value="NAD_synthase"/>
    <property type="match status" value="1"/>
</dbReference>
<dbReference type="PRINTS" id="PR00097">
    <property type="entry name" value="ANTSNTHASEII"/>
</dbReference>
<dbReference type="PRINTS" id="PR00096">
    <property type="entry name" value="GATASE"/>
</dbReference>
<dbReference type="SUPFAM" id="SSF52402">
    <property type="entry name" value="Adenine nucleotide alpha hydrolases-like"/>
    <property type="match status" value="1"/>
</dbReference>
<dbReference type="SUPFAM" id="SSF52317">
    <property type="entry name" value="Class I glutamine amidotransferase-like"/>
    <property type="match status" value="1"/>
</dbReference>
<dbReference type="SUPFAM" id="SSF54810">
    <property type="entry name" value="GMP synthetase C-terminal dimerisation domain"/>
    <property type="match status" value="1"/>
</dbReference>
<dbReference type="PROSITE" id="PS51273">
    <property type="entry name" value="GATASE_TYPE_1"/>
    <property type="match status" value="1"/>
</dbReference>
<dbReference type="PROSITE" id="PS51553">
    <property type="entry name" value="GMPS_ATP_PPASE"/>
    <property type="match status" value="1"/>
</dbReference>
<reference key="1">
    <citation type="submission" date="2009-03" db="EMBL/GenBank/DDBJ databases">
        <title>Brucella melitensis ATCC 23457 whole genome shotgun sequencing project.</title>
        <authorList>
            <person name="Setubal J.C."/>
            <person name="Boyle S."/>
            <person name="Crasta O.R."/>
            <person name="Gillespie J.J."/>
            <person name="Kenyon R.W."/>
            <person name="Lu J."/>
            <person name="Mane S."/>
            <person name="Nagrani S."/>
            <person name="Shallom J.M."/>
            <person name="Shallom S."/>
            <person name="Shukla M."/>
            <person name="Snyder E.E."/>
            <person name="Sobral B.W."/>
            <person name="Wattam A.R."/>
            <person name="Will R."/>
            <person name="Williams K."/>
            <person name="Yoo H."/>
            <person name="Munk C."/>
            <person name="Tapia R."/>
            <person name="Han C."/>
            <person name="Detter J.C."/>
            <person name="Bruce D."/>
            <person name="Brettin T.S."/>
        </authorList>
    </citation>
    <scope>NUCLEOTIDE SEQUENCE [LARGE SCALE GENOMIC DNA]</scope>
    <source>
        <strain>ATCC 23457</strain>
    </source>
</reference>
<name>GUAA_BRUMB</name>
<proteinExistence type="inferred from homology"/>
<accession>C0RKS9</accession>
<feature type="chain" id="PRO_1000190230" description="GMP synthase [glutamine-hydrolyzing]">
    <location>
        <begin position="1"/>
        <end position="520"/>
    </location>
</feature>
<feature type="domain" description="Glutamine amidotransferase type-1" evidence="1">
    <location>
        <begin position="9"/>
        <end position="202"/>
    </location>
</feature>
<feature type="domain" description="GMPS ATP-PPase" evidence="1">
    <location>
        <begin position="203"/>
        <end position="395"/>
    </location>
</feature>
<feature type="active site" description="Nucleophile" evidence="1">
    <location>
        <position position="86"/>
    </location>
</feature>
<feature type="active site" evidence="1">
    <location>
        <position position="176"/>
    </location>
</feature>
<feature type="active site" evidence="1">
    <location>
        <position position="178"/>
    </location>
</feature>
<feature type="binding site" evidence="1">
    <location>
        <begin position="230"/>
        <end position="236"/>
    </location>
    <ligand>
        <name>ATP</name>
        <dbReference type="ChEBI" id="CHEBI:30616"/>
    </ligand>
</feature>
<comment type="function">
    <text evidence="1">Catalyzes the synthesis of GMP from XMP.</text>
</comment>
<comment type="catalytic activity">
    <reaction evidence="1">
        <text>XMP + L-glutamine + ATP + H2O = GMP + L-glutamate + AMP + diphosphate + 2 H(+)</text>
        <dbReference type="Rhea" id="RHEA:11680"/>
        <dbReference type="ChEBI" id="CHEBI:15377"/>
        <dbReference type="ChEBI" id="CHEBI:15378"/>
        <dbReference type="ChEBI" id="CHEBI:29985"/>
        <dbReference type="ChEBI" id="CHEBI:30616"/>
        <dbReference type="ChEBI" id="CHEBI:33019"/>
        <dbReference type="ChEBI" id="CHEBI:57464"/>
        <dbReference type="ChEBI" id="CHEBI:58115"/>
        <dbReference type="ChEBI" id="CHEBI:58359"/>
        <dbReference type="ChEBI" id="CHEBI:456215"/>
        <dbReference type="EC" id="6.3.5.2"/>
    </reaction>
</comment>
<comment type="pathway">
    <text evidence="1">Purine metabolism; GMP biosynthesis; GMP from XMP (L-Gln route): step 1/1.</text>
</comment>
<comment type="subunit">
    <text evidence="1">Homodimer.</text>
</comment>
<protein>
    <recommendedName>
        <fullName evidence="1">GMP synthase [glutamine-hydrolyzing]</fullName>
        <ecNumber evidence="1">6.3.5.2</ecNumber>
    </recommendedName>
    <alternativeName>
        <fullName evidence="1">GMP synthetase</fullName>
    </alternativeName>
    <alternativeName>
        <fullName evidence="1">Glutamine amidotransferase</fullName>
    </alternativeName>
</protein>
<evidence type="ECO:0000255" key="1">
    <source>
        <dbReference type="HAMAP-Rule" id="MF_00344"/>
    </source>
</evidence>
<gene>
    <name evidence="1" type="primary">guaA</name>
    <name type="ordered locus">BMEA_B0360</name>
</gene>
<keyword id="KW-0067">ATP-binding</keyword>
<keyword id="KW-0315">Glutamine amidotransferase</keyword>
<keyword id="KW-0332">GMP biosynthesis</keyword>
<keyword id="KW-0436">Ligase</keyword>
<keyword id="KW-0547">Nucleotide-binding</keyword>
<keyword id="KW-0658">Purine biosynthesis</keyword>
<organism>
    <name type="scientific">Brucella melitensis biotype 2 (strain ATCC 23457)</name>
    <dbReference type="NCBI Taxonomy" id="546272"/>
    <lineage>
        <taxon>Bacteria</taxon>
        <taxon>Pseudomonadati</taxon>
        <taxon>Pseudomonadota</taxon>
        <taxon>Alphaproteobacteria</taxon>
        <taxon>Hyphomicrobiales</taxon>
        <taxon>Brucellaceae</taxon>
        <taxon>Brucella/Ochrobactrum group</taxon>
        <taxon>Brucella</taxon>
    </lineage>
</organism>